<proteinExistence type="inferred from homology"/>
<name>MURD_BURA4</name>
<sequence>MFGDRQRPMVLVLGLGESGLAIARWCARHGCRLRIADTREAPPNLAALQAEGIDAEFVGGPFTPSLLDGGVEIVGLSPGLSPLEPALAALIAAANERAIAVWGELEFFAQALRALGTSGYQPKVLAITGTNGKTTTTNLTGLLCQRSGKKVAVAGNISPAMLDRLARAIDETALPDVWVLELSSFQLETARTFAPDAAAILNITQDHLDWHGSFDAYAAAKGRVFGATTTRVLNRDDAAVMKFAPAAGAADAARTVTFGLNEPAQQGDYGLSRDNGIAWLVEAVDRDAPDETTSRRRKRDGVHTPDIAQKRLMPADALRIRGLHNAANALAAFALARAIDLPAAPLLHALREYRGEAHRVEVIATIDDVDYVDDSKGTNVGATVAALDGLAQKIVLIAGGDGKGQDFAPLVAPVARWCRAVMLIGRDAPAIRDTLAETGVPLADHATLEAAVHAAAELAEPGDAVLLSPACASLDMFRNYAHRADVFRAAVDEIAIDKGATT</sequence>
<protein>
    <recommendedName>
        <fullName evidence="1">UDP-N-acetylmuramoylalanine--D-glutamate ligase</fullName>
        <ecNumber evidence="1">6.3.2.9</ecNumber>
    </recommendedName>
    <alternativeName>
        <fullName evidence="1">D-glutamic acid-adding enzyme</fullName>
    </alternativeName>
    <alternativeName>
        <fullName evidence="1">UDP-N-acetylmuramoyl-L-alanyl-D-glutamate synthetase</fullName>
    </alternativeName>
</protein>
<keyword id="KW-0067">ATP-binding</keyword>
<keyword id="KW-0131">Cell cycle</keyword>
<keyword id="KW-0132">Cell division</keyword>
<keyword id="KW-0133">Cell shape</keyword>
<keyword id="KW-0961">Cell wall biogenesis/degradation</keyword>
<keyword id="KW-0963">Cytoplasm</keyword>
<keyword id="KW-0436">Ligase</keyword>
<keyword id="KW-0547">Nucleotide-binding</keyword>
<keyword id="KW-0573">Peptidoglycan synthesis</keyword>
<reference key="1">
    <citation type="submission" date="2008-04" db="EMBL/GenBank/DDBJ databases">
        <title>Complete sequence of chromosome 1 of Burkholderia ambifaria MC40-6.</title>
        <authorList>
            <person name="Copeland A."/>
            <person name="Lucas S."/>
            <person name="Lapidus A."/>
            <person name="Glavina del Rio T."/>
            <person name="Dalin E."/>
            <person name="Tice H."/>
            <person name="Pitluck S."/>
            <person name="Chain P."/>
            <person name="Malfatti S."/>
            <person name="Shin M."/>
            <person name="Vergez L."/>
            <person name="Lang D."/>
            <person name="Schmutz J."/>
            <person name="Larimer F."/>
            <person name="Land M."/>
            <person name="Hauser L."/>
            <person name="Kyrpides N."/>
            <person name="Lykidis A."/>
            <person name="Ramette A."/>
            <person name="Konstantinidis K."/>
            <person name="Tiedje J."/>
            <person name="Richardson P."/>
        </authorList>
    </citation>
    <scope>NUCLEOTIDE SEQUENCE [LARGE SCALE GENOMIC DNA]</scope>
    <source>
        <strain>MC40-6</strain>
    </source>
</reference>
<evidence type="ECO:0000255" key="1">
    <source>
        <dbReference type="HAMAP-Rule" id="MF_00639"/>
    </source>
</evidence>
<comment type="function">
    <text evidence="1">Cell wall formation. Catalyzes the addition of glutamate to the nucleotide precursor UDP-N-acetylmuramoyl-L-alanine (UMA).</text>
</comment>
<comment type="catalytic activity">
    <reaction evidence="1">
        <text>UDP-N-acetyl-alpha-D-muramoyl-L-alanine + D-glutamate + ATP = UDP-N-acetyl-alpha-D-muramoyl-L-alanyl-D-glutamate + ADP + phosphate + H(+)</text>
        <dbReference type="Rhea" id="RHEA:16429"/>
        <dbReference type="ChEBI" id="CHEBI:15378"/>
        <dbReference type="ChEBI" id="CHEBI:29986"/>
        <dbReference type="ChEBI" id="CHEBI:30616"/>
        <dbReference type="ChEBI" id="CHEBI:43474"/>
        <dbReference type="ChEBI" id="CHEBI:83898"/>
        <dbReference type="ChEBI" id="CHEBI:83900"/>
        <dbReference type="ChEBI" id="CHEBI:456216"/>
        <dbReference type="EC" id="6.3.2.9"/>
    </reaction>
</comment>
<comment type="pathway">
    <text evidence="1">Cell wall biogenesis; peptidoglycan biosynthesis.</text>
</comment>
<comment type="subcellular location">
    <subcellularLocation>
        <location evidence="1">Cytoplasm</location>
    </subcellularLocation>
</comment>
<comment type="similarity">
    <text evidence="1">Belongs to the MurCDEF family.</text>
</comment>
<accession>B1YSS2</accession>
<feature type="chain" id="PRO_1000130832" description="UDP-N-acetylmuramoylalanine--D-glutamate ligase">
    <location>
        <begin position="1"/>
        <end position="502"/>
    </location>
</feature>
<feature type="binding site" evidence="1">
    <location>
        <begin position="129"/>
        <end position="135"/>
    </location>
    <ligand>
        <name>ATP</name>
        <dbReference type="ChEBI" id="CHEBI:30616"/>
    </ligand>
</feature>
<dbReference type="EC" id="6.3.2.9" evidence="1"/>
<dbReference type="EMBL" id="CP001025">
    <property type="protein sequence ID" value="ACB62983.1"/>
    <property type="molecule type" value="Genomic_DNA"/>
</dbReference>
<dbReference type="RefSeq" id="WP_012363026.1">
    <property type="nucleotide sequence ID" value="NC_010551.1"/>
</dbReference>
<dbReference type="SMR" id="B1YSS2"/>
<dbReference type="KEGG" id="bac:BamMC406_0486"/>
<dbReference type="HOGENOM" id="CLU_032540_1_1_4"/>
<dbReference type="OrthoDB" id="9809796at2"/>
<dbReference type="UniPathway" id="UPA00219"/>
<dbReference type="Proteomes" id="UP000001680">
    <property type="component" value="Chromosome 1"/>
</dbReference>
<dbReference type="GO" id="GO:0005737">
    <property type="term" value="C:cytoplasm"/>
    <property type="evidence" value="ECO:0007669"/>
    <property type="project" value="UniProtKB-SubCell"/>
</dbReference>
<dbReference type="GO" id="GO:0005524">
    <property type="term" value="F:ATP binding"/>
    <property type="evidence" value="ECO:0007669"/>
    <property type="project" value="UniProtKB-UniRule"/>
</dbReference>
<dbReference type="GO" id="GO:0008764">
    <property type="term" value="F:UDP-N-acetylmuramoylalanine-D-glutamate ligase activity"/>
    <property type="evidence" value="ECO:0007669"/>
    <property type="project" value="UniProtKB-UniRule"/>
</dbReference>
<dbReference type="GO" id="GO:0051301">
    <property type="term" value="P:cell division"/>
    <property type="evidence" value="ECO:0007669"/>
    <property type="project" value="UniProtKB-KW"/>
</dbReference>
<dbReference type="GO" id="GO:0071555">
    <property type="term" value="P:cell wall organization"/>
    <property type="evidence" value="ECO:0007669"/>
    <property type="project" value="UniProtKB-KW"/>
</dbReference>
<dbReference type="GO" id="GO:0009252">
    <property type="term" value="P:peptidoglycan biosynthetic process"/>
    <property type="evidence" value="ECO:0007669"/>
    <property type="project" value="UniProtKB-UniRule"/>
</dbReference>
<dbReference type="GO" id="GO:0008360">
    <property type="term" value="P:regulation of cell shape"/>
    <property type="evidence" value="ECO:0007669"/>
    <property type="project" value="UniProtKB-KW"/>
</dbReference>
<dbReference type="Gene3D" id="3.90.190.20">
    <property type="entry name" value="Mur ligase, C-terminal domain"/>
    <property type="match status" value="1"/>
</dbReference>
<dbReference type="Gene3D" id="3.40.1190.10">
    <property type="entry name" value="Mur-like, catalytic domain"/>
    <property type="match status" value="1"/>
</dbReference>
<dbReference type="Gene3D" id="3.40.50.720">
    <property type="entry name" value="NAD(P)-binding Rossmann-like Domain"/>
    <property type="match status" value="1"/>
</dbReference>
<dbReference type="HAMAP" id="MF_00639">
    <property type="entry name" value="MurD"/>
    <property type="match status" value="1"/>
</dbReference>
<dbReference type="InterPro" id="IPR036565">
    <property type="entry name" value="Mur-like_cat_sf"/>
</dbReference>
<dbReference type="InterPro" id="IPR004101">
    <property type="entry name" value="Mur_ligase_C"/>
</dbReference>
<dbReference type="InterPro" id="IPR036615">
    <property type="entry name" value="Mur_ligase_C_dom_sf"/>
</dbReference>
<dbReference type="InterPro" id="IPR013221">
    <property type="entry name" value="Mur_ligase_cen"/>
</dbReference>
<dbReference type="InterPro" id="IPR005762">
    <property type="entry name" value="MurD"/>
</dbReference>
<dbReference type="NCBIfam" id="TIGR01087">
    <property type="entry name" value="murD"/>
    <property type="match status" value="1"/>
</dbReference>
<dbReference type="PANTHER" id="PTHR43692">
    <property type="entry name" value="UDP-N-ACETYLMURAMOYLALANINE--D-GLUTAMATE LIGASE"/>
    <property type="match status" value="1"/>
</dbReference>
<dbReference type="PANTHER" id="PTHR43692:SF1">
    <property type="entry name" value="UDP-N-ACETYLMURAMOYLALANINE--D-GLUTAMATE LIGASE"/>
    <property type="match status" value="1"/>
</dbReference>
<dbReference type="Pfam" id="PF02875">
    <property type="entry name" value="Mur_ligase_C"/>
    <property type="match status" value="1"/>
</dbReference>
<dbReference type="Pfam" id="PF08245">
    <property type="entry name" value="Mur_ligase_M"/>
    <property type="match status" value="1"/>
</dbReference>
<dbReference type="Pfam" id="PF21799">
    <property type="entry name" value="MurD-like_N"/>
    <property type="match status" value="1"/>
</dbReference>
<dbReference type="SUPFAM" id="SSF51984">
    <property type="entry name" value="MurCD N-terminal domain"/>
    <property type="match status" value="1"/>
</dbReference>
<dbReference type="SUPFAM" id="SSF53623">
    <property type="entry name" value="MurD-like peptide ligases, catalytic domain"/>
    <property type="match status" value="1"/>
</dbReference>
<dbReference type="SUPFAM" id="SSF53244">
    <property type="entry name" value="MurD-like peptide ligases, peptide-binding domain"/>
    <property type="match status" value="1"/>
</dbReference>
<gene>
    <name evidence="1" type="primary">murD</name>
    <name type="ordered locus">BamMC406_0486</name>
</gene>
<organism>
    <name type="scientific">Burkholderia ambifaria (strain MC40-6)</name>
    <dbReference type="NCBI Taxonomy" id="398577"/>
    <lineage>
        <taxon>Bacteria</taxon>
        <taxon>Pseudomonadati</taxon>
        <taxon>Pseudomonadota</taxon>
        <taxon>Betaproteobacteria</taxon>
        <taxon>Burkholderiales</taxon>
        <taxon>Burkholderiaceae</taxon>
        <taxon>Burkholderia</taxon>
        <taxon>Burkholderia cepacia complex</taxon>
    </lineage>
</organism>